<gene>
    <name type="primary">moaB</name>
    <name type="ordered locus">Sca_1764</name>
</gene>
<keyword id="KW-0501">Molybdenum cofactor biosynthesis</keyword>
<keyword id="KW-1185">Reference proteome</keyword>
<feature type="chain" id="PRO_0000170978" description="Molybdenum cofactor biosynthesis protein B">
    <location>
        <begin position="1"/>
        <end position="170"/>
    </location>
</feature>
<reference key="1">
    <citation type="journal article" date="1998" name="FEMS Microbiol. Lett.">
        <title>Characterization of moeB- part of the molybdenum cofactor biosynthesis gene cluster in Staphylococcus carnosus.</title>
        <authorList>
            <person name="Neubauer H."/>
            <person name="Pantel I."/>
            <person name="Goetz F."/>
        </authorList>
    </citation>
    <scope>NUCLEOTIDE SEQUENCE [GENOMIC DNA]</scope>
</reference>
<reference key="2">
    <citation type="journal article" date="2009" name="Appl. Environ. Microbiol.">
        <title>Genome analysis of the meat starter culture bacterium Staphylococcus carnosus TM300.</title>
        <authorList>
            <person name="Rosenstein R."/>
            <person name="Nerz C."/>
            <person name="Biswas L."/>
            <person name="Resch A."/>
            <person name="Raddatz G."/>
            <person name="Schuster S.C."/>
            <person name="Goetz F."/>
        </authorList>
    </citation>
    <scope>NUCLEOTIDE SEQUENCE [LARGE SCALE GENOMIC DNA]</scope>
    <source>
        <strain>TM300</strain>
    </source>
</reference>
<protein>
    <recommendedName>
        <fullName>Molybdenum cofactor biosynthesis protein B</fullName>
    </recommendedName>
</protein>
<dbReference type="EMBL" id="AF109295">
    <property type="protein sequence ID" value="AAC83137.1"/>
    <property type="molecule type" value="Genomic_DNA"/>
</dbReference>
<dbReference type="EMBL" id="AM295250">
    <property type="protein sequence ID" value="CAL28669.1"/>
    <property type="molecule type" value="Genomic_DNA"/>
</dbReference>
<dbReference type="RefSeq" id="WP_015901005.1">
    <property type="nucleotide sequence ID" value="NC_012121.1"/>
</dbReference>
<dbReference type="SMR" id="Q9ZIN3"/>
<dbReference type="GeneID" id="93794222"/>
<dbReference type="KEGG" id="sca:SCA_1764"/>
<dbReference type="eggNOG" id="COG0521">
    <property type="taxonomic scope" value="Bacteria"/>
</dbReference>
<dbReference type="HOGENOM" id="CLU_077358_2_3_9"/>
<dbReference type="OrthoDB" id="9784492at2"/>
<dbReference type="BioCyc" id="SCAR396513:SCA_RS08975-MONOMER"/>
<dbReference type="UniPathway" id="UPA00344"/>
<dbReference type="Proteomes" id="UP000000444">
    <property type="component" value="Chromosome"/>
</dbReference>
<dbReference type="GO" id="GO:0005829">
    <property type="term" value="C:cytosol"/>
    <property type="evidence" value="ECO:0007669"/>
    <property type="project" value="TreeGrafter"/>
</dbReference>
<dbReference type="GO" id="GO:0006777">
    <property type="term" value="P:Mo-molybdopterin cofactor biosynthetic process"/>
    <property type="evidence" value="ECO:0007669"/>
    <property type="project" value="UniProtKB-KW"/>
</dbReference>
<dbReference type="CDD" id="cd00886">
    <property type="entry name" value="MogA_MoaB"/>
    <property type="match status" value="1"/>
</dbReference>
<dbReference type="FunFam" id="3.40.980.10:FF:000006">
    <property type="entry name" value="Molybdenum cofactor biosynthesis protein B"/>
    <property type="match status" value="1"/>
</dbReference>
<dbReference type="Gene3D" id="3.40.980.10">
    <property type="entry name" value="MoaB/Mog-like domain"/>
    <property type="match status" value="1"/>
</dbReference>
<dbReference type="InterPro" id="IPR012245">
    <property type="entry name" value="MoaB"/>
</dbReference>
<dbReference type="InterPro" id="IPR036425">
    <property type="entry name" value="MoaB/Mog-like_dom_sf"/>
</dbReference>
<dbReference type="InterPro" id="IPR001453">
    <property type="entry name" value="MoaB/Mog_dom"/>
</dbReference>
<dbReference type="InterPro" id="IPR008284">
    <property type="entry name" value="MoCF_biosynth_CS"/>
</dbReference>
<dbReference type="NCBIfam" id="TIGR00177">
    <property type="entry name" value="molyb_syn"/>
    <property type="match status" value="1"/>
</dbReference>
<dbReference type="PANTHER" id="PTHR43232">
    <property type="entry name" value="MOLYBDENUM COFACTOR BIOSYNTHESIS PROTEIN B"/>
    <property type="match status" value="1"/>
</dbReference>
<dbReference type="PANTHER" id="PTHR43232:SF2">
    <property type="entry name" value="MOLYBDENUM COFACTOR BIOSYNTHESIS PROTEIN B"/>
    <property type="match status" value="1"/>
</dbReference>
<dbReference type="Pfam" id="PF00994">
    <property type="entry name" value="MoCF_biosynth"/>
    <property type="match status" value="1"/>
</dbReference>
<dbReference type="PIRSF" id="PIRSF006443">
    <property type="entry name" value="MoaB"/>
    <property type="match status" value="1"/>
</dbReference>
<dbReference type="SMART" id="SM00852">
    <property type="entry name" value="MoCF_biosynth"/>
    <property type="match status" value="1"/>
</dbReference>
<dbReference type="SUPFAM" id="SSF53218">
    <property type="entry name" value="Molybdenum cofactor biosynthesis proteins"/>
    <property type="match status" value="1"/>
</dbReference>
<dbReference type="PROSITE" id="PS01078">
    <property type="entry name" value="MOCF_BIOSYNTHESIS_1"/>
    <property type="match status" value="1"/>
</dbReference>
<proteinExistence type="inferred from homology"/>
<evidence type="ECO:0000250" key="1"/>
<evidence type="ECO:0000305" key="2"/>
<comment type="function">
    <text evidence="1">May be involved in the biosynthesis of molybdopterin.</text>
</comment>
<comment type="pathway">
    <text>Cofactor biosynthesis; molybdopterin biosynthesis.</text>
</comment>
<comment type="similarity">
    <text evidence="2">Belongs to the MoaB/Mog family.</text>
</comment>
<name>MOAB_STACT</name>
<organism>
    <name type="scientific">Staphylococcus carnosus (strain TM300)</name>
    <dbReference type="NCBI Taxonomy" id="396513"/>
    <lineage>
        <taxon>Bacteria</taxon>
        <taxon>Bacillati</taxon>
        <taxon>Bacillota</taxon>
        <taxon>Bacilli</taxon>
        <taxon>Bacillales</taxon>
        <taxon>Staphylococcaceae</taxon>
        <taxon>Staphylococcus</taxon>
    </lineage>
</organism>
<accession>Q9ZIN3</accession>
<accession>B9DLY9</accession>
<sequence length="170" mass="18651">MTKNEHVNVKLDRDIQCAVLTVSDTRTPETDKGGNLAKELLSEINVEIKPEHYAIVKDDKQAITEQLQQWLAEDVDVIITTGGTGIAQRDVTIEAVTPLLSKEIEGFGELFRYLSYAEDVGTRALLSRAVAGTVGEQLIFSVPGSTGAVKLAMNKLIKPELNHLIHELTK</sequence>